<protein>
    <recommendedName>
        <fullName>Signal transduction protein MDG1</fullName>
    </recommendedName>
    <alternativeName>
        <fullName>Multicopy suppressor of defective G-protein 1</fullName>
    </alternativeName>
</protein>
<sequence length="366" mass="40278">MQSSLPQFTFKWPKGPEAIILTGTFDDWKGTLPMVKDPSGAFEITLPVTFDSPSSKFYFKFIVDGQWLPSKDYKVNIDEGVENNFITEEDVIKQRENGSSTLVPESAGLAVSKNAPLIEPEAEKRAKKLRKFKIKRVIKTNKQTGERSIFSQEVVELPDSEDETQQVNKTGKNADGLSGTTTIIENNVGVNEEKAIKPYEENHPKVNLVKSEGYVTDGLGKTQSSESRLYELSAEDLEKEEEEEDEDKGGGKDTSTSADAEASEDQNKEPLSKSAKFEKPEEKVPVSSITSHAKETSVKPTGKVATETQTYETKQGAPTAAAKKIEAKKATRPSKPKGTKETPNKGVQKNPAKNGGFFKKLAQLLK</sequence>
<name>MDG1_YEAST</name>
<dbReference type="EMBL" id="L02783">
    <property type="protein sequence ID" value="AAA63785.1"/>
    <property type="molecule type" value="Genomic_DNA"/>
</dbReference>
<dbReference type="EMBL" id="Z71449">
    <property type="protein sequence ID" value="CAA96064.1"/>
    <property type="molecule type" value="Genomic_DNA"/>
</dbReference>
<dbReference type="EMBL" id="BK006947">
    <property type="protein sequence ID" value="DAA10377.1"/>
    <property type="molecule type" value="Genomic_DNA"/>
</dbReference>
<dbReference type="PIR" id="S56040">
    <property type="entry name" value="S56040"/>
</dbReference>
<dbReference type="RefSeq" id="NP_014226.1">
    <property type="nucleotide sequence ID" value="NM_001183011.1"/>
</dbReference>
<dbReference type="SMR" id="P53885"/>
<dbReference type="BioGRID" id="35657">
    <property type="interactions" value="36"/>
</dbReference>
<dbReference type="DIP" id="DIP-2777N"/>
<dbReference type="FunCoup" id="P53885">
    <property type="interactions" value="50"/>
</dbReference>
<dbReference type="IntAct" id="P53885">
    <property type="interactions" value="14"/>
</dbReference>
<dbReference type="MINT" id="P53885"/>
<dbReference type="STRING" id="4932.YNL173C"/>
<dbReference type="iPTMnet" id="P53885"/>
<dbReference type="PaxDb" id="4932-YNL173C"/>
<dbReference type="PeptideAtlas" id="P53885"/>
<dbReference type="EnsemblFungi" id="YNL173C_mRNA">
    <property type="protein sequence ID" value="YNL173C"/>
    <property type="gene ID" value="YNL173C"/>
</dbReference>
<dbReference type="GeneID" id="855548"/>
<dbReference type="KEGG" id="sce:YNL173C"/>
<dbReference type="AGR" id="SGD:S000005117"/>
<dbReference type="SGD" id="S000005117">
    <property type="gene designation" value="MDG1"/>
</dbReference>
<dbReference type="VEuPathDB" id="FungiDB:YNL173C"/>
<dbReference type="eggNOG" id="KOG1616">
    <property type="taxonomic scope" value="Eukaryota"/>
</dbReference>
<dbReference type="GeneTree" id="ENSGT00940000176749"/>
<dbReference type="HOGENOM" id="CLU_765367_0_0_1"/>
<dbReference type="InParanoid" id="P53885"/>
<dbReference type="OMA" id="WPKGPEA"/>
<dbReference type="OrthoDB" id="5976022at2759"/>
<dbReference type="BioCyc" id="YEAST:G3O-33186-MONOMER"/>
<dbReference type="Reactome" id="R-SCE-1632852">
    <property type="pathway name" value="Macroautophagy"/>
</dbReference>
<dbReference type="Reactome" id="R-SCE-163680">
    <property type="pathway name" value="AMPK inhibits chREBP transcriptional activation activity"/>
</dbReference>
<dbReference type="Reactome" id="R-SCE-200425">
    <property type="pathway name" value="Carnitine shuttle"/>
</dbReference>
<dbReference type="Reactome" id="R-SCE-380972">
    <property type="pathway name" value="Energy dependent regulation of mTOR by LKB1-AMPK"/>
</dbReference>
<dbReference type="BioGRID-ORCS" id="855548">
    <property type="hits" value="0 hits in 10 CRISPR screens"/>
</dbReference>
<dbReference type="PRO" id="PR:P53885"/>
<dbReference type="Proteomes" id="UP000002311">
    <property type="component" value="Chromosome XIV"/>
</dbReference>
<dbReference type="RNAct" id="P53885">
    <property type="molecule type" value="protein"/>
</dbReference>
<dbReference type="GO" id="GO:0005737">
    <property type="term" value="C:cytoplasm"/>
    <property type="evidence" value="ECO:0007005"/>
    <property type="project" value="SGD"/>
</dbReference>
<dbReference type="GO" id="GO:0031588">
    <property type="term" value="C:nucleotide-activated protein kinase complex"/>
    <property type="evidence" value="ECO:0000318"/>
    <property type="project" value="GO_Central"/>
</dbReference>
<dbReference type="GO" id="GO:0005634">
    <property type="term" value="C:nucleus"/>
    <property type="evidence" value="ECO:0007005"/>
    <property type="project" value="SGD"/>
</dbReference>
<dbReference type="GO" id="GO:0005886">
    <property type="term" value="C:plasma membrane"/>
    <property type="evidence" value="ECO:0000314"/>
    <property type="project" value="SGD"/>
</dbReference>
<dbReference type="GO" id="GO:0019901">
    <property type="term" value="F:protein kinase binding"/>
    <property type="evidence" value="ECO:0000318"/>
    <property type="project" value="GO_Central"/>
</dbReference>
<dbReference type="GO" id="GO:0000750">
    <property type="term" value="P:pheromone-dependent signal transduction involved in conjugation with cellular fusion"/>
    <property type="evidence" value="ECO:0000315"/>
    <property type="project" value="SGD"/>
</dbReference>
<dbReference type="GO" id="GO:0007165">
    <property type="term" value="P:signal transduction"/>
    <property type="evidence" value="ECO:0000318"/>
    <property type="project" value="GO_Central"/>
</dbReference>
<dbReference type="CDD" id="cd02859">
    <property type="entry name" value="E_set_AMPKbeta_like_N"/>
    <property type="match status" value="1"/>
</dbReference>
<dbReference type="Gene3D" id="2.60.40.10">
    <property type="entry name" value="Immunoglobulins"/>
    <property type="match status" value="1"/>
</dbReference>
<dbReference type="InterPro" id="IPR032640">
    <property type="entry name" value="AMPK1_CBM"/>
</dbReference>
<dbReference type="InterPro" id="IPR050827">
    <property type="entry name" value="CRP1_MDG1_kinase"/>
</dbReference>
<dbReference type="InterPro" id="IPR013783">
    <property type="entry name" value="Ig-like_fold"/>
</dbReference>
<dbReference type="InterPro" id="IPR014756">
    <property type="entry name" value="Ig_E-set"/>
</dbReference>
<dbReference type="PANTHER" id="PTHR10343">
    <property type="entry name" value="5'-AMP-ACTIVATED PROTEIN KINASE , BETA SUBUNIT"/>
    <property type="match status" value="1"/>
</dbReference>
<dbReference type="PANTHER" id="PTHR10343:SF81">
    <property type="entry name" value="CRUCIFORM DNA-RECOGNIZING PROTEIN 1-RELATED"/>
    <property type="match status" value="1"/>
</dbReference>
<dbReference type="Pfam" id="PF16561">
    <property type="entry name" value="AMPK1_CBM"/>
    <property type="match status" value="1"/>
</dbReference>
<dbReference type="SUPFAM" id="SSF81296">
    <property type="entry name" value="E set domains"/>
    <property type="match status" value="1"/>
</dbReference>
<proteinExistence type="evidence at protein level"/>
<comment type="function">
    <text evidence="3">Involved in G-protein mediated signal transduction and in the regulation of polarized cell growth in pheromone-induced cells.</text>
</comment>
<comment type="subcellular location">
    <subcellularLocation>
        <location evidence="3">Cell membrane</location>
        <topology evidence="3">Peripheral membrane protein</topology>
    </subcellularLocation>
</comment>
<comment type="miscellaneous">
    <text evidence="2">Present with 1240 molecules/cell in log phase SD medium.</text>
</comment>
<comment type="similarity">
    <text evidence="4">Belongs to the CRP1/MDG1 family.</text>
</comment>
<gene>
    <name type="primary">MDG1</name>
    <name type="ordered locus">YNL173C</name>
    <name type="ORF">N1673</name>
</gene>
<feature type="chain" id="PRO_0000096326" description="Signal transduction protein MDG1">
    <location>
        <begin position="1"/>
        <end position="366"/>
    </location>
</feature>
<feature type="region of interest" description="Disordered" evidence="1">
    <location>
        <begin position="159"/>
        <end position="180"/>
    </location>
</feature>
<feature type="region of interest" description="Disordered" evidence="1">
    <location>
        <begin position="217"/>
        <end position="366"/>
    </location>
</feature>
<feature type="compositionally biased region" description="Acidic residues" evidence="1">
    <location>
        <begin position="233"/>
        <end position="247"/>
    </location>
</feature>
<feature type="compositionally biased region" description="Basic and acidic residues" evidence="1">
    <location>
        <begin position="265"/>
        <end position="284"/>
    </location>
</feature>
<feature type="modified residue" description="Phosphoserine" evidence="5 6">
    <location>
        <position position="160"/>
    </location>
</feature>
<feature type="modified residue" description="Phosphothreonine" evidence="6">
    <location>
        <position position="216"/>
    </location>
</feature>
<feature type="modified residue" description="Phosphoserine" evidence="6">
    <location>
        <position position="288"/>
    </location>
</feature>
<feature type="cross-link" description="Glycyl lysine isopeptide (Lys-Gly) (interchain with G-Cter in ubiquitin)" evidence="7">
    <location>
        <position position="314"/>
    </location>
</feature>
<reference key="1">
    <citation type="journal article" date="1996" name="Mol. Gen. Genet.">
        <title>Genetic interactions indicate a role for Mdg1p and the SH3 domain protein Bem1p in linking the G-protein mediated yeast pheromone signalling pathway to regulators of cell polarity.</title>
        <authorList>
            <person name="Leberer E."/>
            <person name="Chenevert J."/>
            <person name="Leeuw T."/>
            <person name="Harcus D."/>
            <person name="Herskowitz I."/>
            <person name="Thomas D.Y."/>
        </authorList>
    </citation>
    <scope>NUCLEOTIDE SEQUENCE [GENOMIC DNA]</scope>
    <scope>FUNCTION</scope>
    <scope>SUBCELLULAR LOCATION</scope>
</reference>
<reference key="2">
    <citation type="journal article" date="1997" name="Nature">
        <title>The nucleotide sequence of Saccharomyces cerevisiae chromosome XIV and its evolutionary implications.</title>
        <authorList>
            <person name="Philippsen P."/>
            <person name="Kleine K."/>
            <person name="Poehlmann R."/>
            <person name="Duesterhoeft A."/>
            <person name="Hamberg K."/>
            <person name="Hegemann J.H."/>
            <person name="Obermaier B."/>
            <person name="Urrestarazu L.A."/>
            <person name="Aert R."/>
            <person name="Albermann K."/>
            <person name="Altmann R."/>
            <person name="Andre B."/>
            <person name="Baladron V."/>
            <person name="Ballesta J.P.G."/>
            <person name="Becam A.-M."/>
            <person name="Beinhauer J.D."/>
            <person name="Boskovic J."/>
            <person name="Buitrago M.J."/>
            <person name="Bussereau F."/>
            <person name="Coster F."/>
            <person name="Crouzet M."/>
            <person name="D'Angelo M."/>
            <person name="Dal Pero F."/>
            <person name="De Antoni A."/>
            <person name="del Rey F."/>
            <person name="Doignon F."/>
            <person name="Domdey H."/>
            <person name="Dubois E."/>
            <person name="Fiedler T.A."/>
            <person name="Fleig U."/>
            <person name="Floeth M."/>
            <person name="Fritz C."/>
            <person name="Gaillardin C."/>
            <person name="Garcia-Cantalejo J.M."/>
            <person name="Glansdorff N."/>
            <person name="Goffeau A."/>
            <person name="Gueldener U."/>
            <person name="Herbert C.J."/>
            <person name="Heumann K."/>
            <person name="Heuss-Neitzel D."/>
            <person name="Hilbert H."/>
            <person name="Hinni K."/>
            <person name="Iraqui Houssaini I."/>
            <person name="Jacquet M."/>
            <person name="Jimenez A."/>
            <person name="Jonniaux J.-L."/>
            <person name="Karpfinger-Hartl L."/>
            <person name="Lanfranchi G."/>
            <person name="Lepingle A."/>
            <person name="Levesque H."/>
            <person name="Lyck R."/>
            <person name="Maftahi M."/>
            <person name="Mallet L."/>
            <person name="Maurer C.T.C."/>
            <person name="Messenguy F."/>
            <person name="Mewes H.-W."/>
            <person name="Moestl D."/>
            <person name="Nasr F."/>
            <person name="Nicaud J.-M."/>
            <person name="Niedenthal R.K."/>
            <person name="Pandolfo D."/>
            <person name="Pierard A."/>
            <person name="Piravandi E."/>
            <person name="Planta R.J."/>
            <person name="Pohl T.M."/>
            <person name="Purnelle B."/>
            <person name="Rebischung C."/>
            <person name="Remacha M.A."/>
            <person name="Revuelta J.L."/>
            <person name="Rinke M."/>
            <person name="Saiz J.E."/>
            <person name="Sartorello F."/>
            <person name="Scherens B."/>
            <person name="Sen-Gupta M."/>
            <person name="Soler-Mira A."/>
            <person name="Urbanus J.H.M."/>
            <person name="Valle G."/>
            <person name="Van Dyck L."/>
            <person name="Verhasselt P."/>
            <person name="Vierendeels F."/>
            <person name="Vissers S."/>
            <person name="Voet M."/>
            <person name="Volckaert G."/>
            <person name="Wach A."/>
            <person name="Wambutt R."/>
            <person name="Wedler H."/>
            <person name="Zollner A."/>
            <person name="Hani J."/>
        </authorList>
    </citation>
    <scope>NUCLEOTIDE SEQUENCE [LARGE SCALE GENOMIC DNA]</scope>
    <source>
        <strain>ATCC 204508 / S288c</strain>
    </source>
</reference>
<reference key="3">
    <citation type="journal article" date="2014" name="G3 (Bethesda)">
        <title>The reference genome sequence of Saccharomyces cerevisiae: Then and now.</title>
        <authorList>
            <person name="Engel S.R."/>
            <person name="Dietrich F.S."/>
            <person name="Fisk D.G."/>
            <person name="Binkley G."/>
            <person name="Balakrishnan R."/>
            <person name="Costanzo M.C."/>
            <person name="Dwight S.S."/>
            <person name="Hitz B.C."/>
            <person name="Karra K."/>
            <person name="Nash R.S."/>
            <person name="Weng S."/>
            <person name="Wong E.D."/>
            <person name="Lloyd P."/>
            <person name="Skrzypek M.S."/>
            <person name="Miyasato S.R."/>
            <person name="Simison M."/>
            <person name="Cherry J.M."/>
        </authorList>
    </citation>
    <scope>GENOME REANNOTATION</scope>
    <source>
        <strain>ATCC 204508 / S288c</strain>
    </source>
</reference>
<reference key="4">
    <citation type="journal article" date="2003" name="Nature">
        <title>Global analysis of protein expression in yeast.</title>
        <authorList>
            <person name="Ghaemmaghami S."/>
            <person name="Huh W.-K."/>
            <person name="Bower K."/>
            <person name="Howson R.W."/>
            <person name="Belle A."/>
            <person name="Dephoure N."/>
            <person name="O'Shea E.K."/>
            <person name="Weissman J.S."/>
        </authorList>
    </citation>
    <scope>LEVEL OF PROTEIN EXPRESSION [LARGE SCALE ANALYSIS]</scope>
</reference>
<reference key="5">
    <citation type="journal article" date="2007" name="J. Proteome Res.">
        <title>Large-scale phosphorylation analysis of alpha-factor-arrested Saccharomyces cerevisiae.</title>
        <authorList>
            <person name="Li X."/>
            <person name="Gerber S.A."/>
            <person name="Rudner A.D."/>
            <person name="Beausoleil S.A."/>
            <person name="Haas W."/>
            <person name="Villen J."/>
            <person name="Elias J.E."/>
            <person name="Gygi S.P."/>
        </authorList>
    </citation>
    <scope>IDENTIFICATION BY MASS SPECTROMETRY [LARGE SCALE ANALYSIS]</scope>
    <source>
        <strain>ADR376</strain>
    </source>
</reference>
<reference key="6">
    <citation type="journal article" date="2008" name="Mol. Cell. Proteomics">
        <title>A multidimensional chromatography technology for in-depth phosphoproteome analysis.</title>
        <authorList>
            <person name="Albuquerque C.P."/>
            <person name="Smolka M.B."/>
            <person name="Payne S.H."/>
            <person name="Bafna V."/>
            <person name="Eng J."/>
            <person name="Zhou H."/>
        </authorList>
    </citation>
    <scope>PHOSPHORYLATION [LARGE SCALE ANALYSIS] AT SER-160</scope>
    <scope>IDENTIFICATION BY MASS SPECTROMETRY [LARGE SCALE ANALYSIS]</scope>
</reference>
<reference key="7">
    <citation type="journal article" date="2009" name="Science">
        <title>Global analysis of Cdk1 substrate phosphorylation sites provides insights into evolution.</title>
        <authorList>
            <person name="Holt L.J."/>
            <person name="Tuch B.B."/>
            <person name="Villen J."/>
            <person name="Johnson A.D."/>
            <person name="Gygi S.P."/>
            <person name="Morgan D.O."/>
        </authorList>
    </citation>
    <scope>PHOSPHORYLATION [LARGE SCALE ANALYSIS] AT SER-160; THR-216 AND SER-288</scope>
    <scope>IDENTIFICATION BY MASS SPECTROMETRY [LARGE SCALE ANALYSIS]</scope>
</reference>
<reference key="8">
    <citation type="journal article" date="2012" name="Proteomics">
        <title>Sites of ubiquitin attachment in Saccharomyces cerevisiae.</title>
        <authorList>
            <person name="Starita L.M."/>
            <person name="Lo R.S."/>
            <person name="Eng J.K."/>
            <person name="von Haller P.D."/>
            <person name="Fields S."/>
        </authorList>
    </citation>
    <scope>UBIQUITINATION [LARGE SCALE ANALYSIS] AT LYS-314</scope>
    <scope>IDENTIFICATION BY MASS SPECTROMETRY [LARGE SCALE ANALYSIS]</scope>
</reference>
<accession>P53885</accession>
<accession>D6W111</accession>
<organism>
    <name type="scientific">Saccharomyces cerevisiae (strain ATCC 204508 / S288c)</name>
    <name type="common">Baker's yeast</name>
    <dbReference type="NCBI Taxonomy" id="559292"/>
    <lineage>
        <taxon>Eukaryota</taxon>
        <taxon>Fungi</taxon>
        <taxon>Dikarya</taxon>
        <taxon>Ascomycota</taxon>
        <taxon>Saccharomycotina</taxon>
        <taxon>Saccharomycetes</taxon>
        <taxon>Saccharomycetales</taxon>
        <taxon>Saccharomycetaceae</taxon>
        <taxon>Saccharomyces</taxon>
    </lineage>
</organism>
<keyword id="KW-1003">Cell membrane</keyword>
<keyword id="KW-1017">Isopeptide bond</keyword>
<keyword id="KW-0472">Membrane</keyword>
<keyword id="KW-0597">Phosphoprotein</keyword>
<keyword id="KW-1185">Reference proteome</keyword>
<keyword id="KW-0832">Ubl conjugation</keyword>
<evidence type="ECO:0000256" key="1">
    <source>
        <dbReference type="SAM" id="MobiDB-lite"/>
    </source>
</evidence>
<evidence type="ECO:0000269" key="2">
    <source>
    </source>
</evidence>
<evidence type="ECO:0000269" key="3">
    <source>
    </source>
</evidence>
<evidence type="ECO:0000305" key="4"/>
<evidence type="ECO:0007744" key="5">
    <source>
    </source>
</evidence>
<evidence type="ECO:0007744" key="6">
    <source>
    </source>
</evidence>
<evidence type="ECO:0007744" key="7">
    <source>
    </source>
</evidence>